<comment type="function">
    <text evidence="1">Catalyzes the conversion of L-lactate to pyruvate. Is coupled to the respiratory chain.</text>
</comment>
<comment type="catalytic activity">
    <reaction evidence="1">
        <text>(S)-lactate + A = pyruvate + AH2</text>
        <dbReference type="Rhea" id="RHEA:45816"/>
        <dbReference type="ChEBI" id="CHEBI:13193"/>
        <dbReference type="ChEBI" id="CHEBI:15361"/>
        <dbReference type="ChEBI" id="CHEBI:16651"/>
        <dbReference type="ChEBI" id="CHEBI:17499"/>
    </reaction>
</comment>
<comment type="cofactor">
    <cofactor evidence="1">
        <name>FMN</name>
        <dbReference type="ChEBI" id="CHEBI:58210"/>
    </cofactor>
</comment>
<comment type="subcellular location">
    <subcellularLocation>
        <location evidence="1">Cell inner membrane</location>
        <topology evidence="1">Peripheral membrane protein</topology>
    </subcellularLocation>
</comment>
<comment type="similarity">
    <text evidence="1">Belongs to the FMN-dependent alpha-hydroxy acid dehydrogenase family.</text>
</comment>
<reference key="1">
    <citation type="submission" date="2008-02" db="EMBL/GenBank/DDBJ databases">
        <title>Complete sequence of Yersinia pseudotuberculosis YPIII.</title>
        <authorList>
            <consortium name="US DOE Joint Genome Institute"/>
            <person name="Copeland A."/>
            <person name="Lucas S."/>
            <person name="Lapidus A."/>
            <person name="Glavina del Rio T."/>
            <person name="Dalin E."/>
            <person name="Tice H."/>
            <person name="Bruce D."/>
            <person name="Goodwin L."/>
            <person name="Pitluck S."/>
            <person name="Munk A.C."/>
            <person name="Brettin T."/>
            <person name="Detter J.C."/>
            <person name="Han C."/>
            <person name="Tapia R."/>
            <person name="Schmutz J."/>
            <person name="Larimer F."/>
            <person name="Land M."/>
            <person name="Hauser L."/>
            <person name="Challacombe J.F."/>
            <person name="Green L."/>
            <person name="Lindler L.E."/>
            <person name="Nikolich M.P."/>
            <person name="Richardson P."/>
        </authorList>
    </citation>
    <scope>NUCLEOTIDE SEQUENCE [LARGE SCALE GENOMIC DNA]</scope>
    <source>
        <strain>YPIII</strain>
    </source>
</reference>
<organism>
    <name type="scientific">Yersinia pseudotuberculosis serotype O:3 (strain YPIII)</name>
    <dbReference type="NCBI Taxonomy" id="502800"/>
    <lineage>
        <taxon>Bacteria</taxon>
        <taxon>Pseudomonadati</taxon>
        <taxon>Pseudomonadota</taxon>
        <taxon>Gammaproteobacteria</taxon>
        <taxon>Enterobacterales</taxon>
        <taxon>Yersiniaceae</taxon>
        <taxon>Yersinia</taxon>
    </lineage>
</organism>
<gene>
    <name evidence="1" type="primary">lldD</name>
    <name type="ordered locus">YPK_2506</name>
</gene>
<keyword id="KW-0997">Cell inner membrane</keyword>
<keyword id="KW-1003">Cell membrane</keyword>
<keyword id="KW-0285">Flavoprotein</keyword>
<keyword id="KW-0288">FMN</keyword>
<keyword id="KW-0472">Membrane</keyword>
<keyword id="KW-0560">Oxidoreductase</keyword>
<proteinExistence type="inferred from homology"/>
<evidence type="ECO:0000255" key="1">
    <source>
        <dbReference type="HAMAP-Rule" id="MF_01559"/>
    </source>
</evidence>
<name>LLDD_YERPY</name>
<dbReference type="EC" id="1.1.-.-" evidence="1"/>
<dbReference type="EMBL" id="CP000950">
    <property type="protein sequence ID" value="ACA68783.1"/>
    <property type="molecule type" value="Genomic_DNA"/>
</dbReference>
<dbReference type="RefSeq" id="WP_002211919.1">
    <property type="nucleotide sequence ID" value="NZ_CP009792.1"/>
</dbReference>
<dbReference type="SMR" id="B1JPU0"/>
<dbReference type="GeneID" id="57977002"/>
<dbReference type="KEGG" id="ypy:YPK_2506"/>
<dbReference type="PATRIC" id="fig|502800.11.peg.3198"/>
<dbReference type="GO" id="GO:0005886">
    <property type="term" value="C:plasma membrane"/>
    <property type="evidence" value="ECO:0007669"/>
    <property type="project" value="UniProtKB-SubCell"/>
</dbReference>
<dbReference type="GO" id="GO:0010181">
    <property type="term" value="F:FMN binding"/>
    <property type="evidence" value="ECO:0007669"/>
    <property type="project" value="InterPro"/>
</dbReference>
<dbReference type="GO" id="GO:0004459">
    <property type="term" value="F:L-lactate dehydrogenase activity"/>
    <property type="evidence" value="ECO:0007669"/>
    <property type="project" value="UniProtKB-UniRule"/>
</dbReference>
<dbReference type="GO" id="GO:0009060">
    <property type="term" value="P:aerobic respiration"/>
    <property type="evidence" value="ECO:0007669"/>
    <property type="project" value="TreeGrafter"/>
</dbReference>
<dbReference type="GO" id="GO:0006089">
    <property type="term" value="P:lactate metabolic process"/>
    <property type="evidence" value="ECO:0007669"/>
    <property type="project" value="UniProtKB-UniRule"/>
</dbReference>
<dbReference type="CDD" id="cd02809">
    <property type="entry name" value="alpha_hydroxyacid_oxid_FMN"/>
    <property type="match status" value="1"/>
</dbReference>
<dbReference type="FunFam" id="3.20.20.70:FF:000029">
    <property type="entry name" value="L-lactate dehydrogenase"/>
    <property type="match status" value="1"/>
</dbReference>
<dbReference type="Gene3D" id="3.20.20.70">
    <property type="entry name" value="Aldolase class I"/>
    <property type="match status" value="1"/>
</dbReference>
<dbReference type="HAMAP" id="MF_01559">
    <property type="entry name" value="L_lact_dehydr"/>
    <property type="match status" value="1"/>
</dbReference>
<dbReference type="InterPro" id="IPR013785">
    <property type="entry name" value="Aldolase_TIM"/>
</dbReference>
<dbReference type="InterPro" id="IPR012133">
    <property type="entry name" value="Alpha-hydoxy_acid_DH_FMN"/>
</dbReference>
<dbReference type="InterPro" id="IPR000262">
    <property type="entry name" value="FMN-dep_DH"/>
</dbReference>
<dbReference type="InterPro" id="IPR037396">
    <property type="entry name" value="FMN_HAD"/>
</dbReference>
<dbReference type="InterPro" id="IPR008259">
    <property type="entry name" value="FMN_hydac_DH_AS"/>
</dbReference>
<dbReference type="InterPro" id="IPR020920">
    <property type="entry name" value="LldD"/>
</dbReference>
<dbReference type="NCBIfam" id="NF033901">
    <property type="entry name" value="L_lactate_LldD"/>
    <property type="match status" value="1"/>
</dbReference>
<dbReference type="NCBIfam" id="NF008398">
    <property type="entry name" value="PRK11197.1"/>
    <property type="match status" value="1"/>
</dbReference>
<dbReference type="PANTHER" id="PTHR10578:SF85">
    <property type="entry name" value="L-LACTATE DEHYDROGENASE"/>
    <property type="match status" value="1"/>
</dbReference>
<dbReference type="PANTHER" id="PTHR10578">
    <property type="entry name" value="S -2-HYDROXY-ACID OXIDASE-RELATED"/>
    <property type="match status" value="1"/>
</dbReference>
<dbReference type="Pfam" id="PF01070">
    <property type="entry name" value="FMN_dh"/>
    <property type="match status" value="1"/>
</dbReference>
<dbReference type="PIRSF" id="PIRSF000138">
    <property type="entry name" value="Al-hdrx_acd_dh"/>
    <property type="match status" value="1"/>
</dbReference>
<dbReference type="SUPFAM" id="SSF51395">
    <property type="entry name" value="FMN-linked oxidoreductases"/>
    <property type="match status" value="1"/>
</dbReference>
<dbReference type="PROSITE" id="PS00557">
    <property type="entry name" value="FMN_HYDROXY_ACID_DH_1"/>
    <property type="match status" value="1"/>
</dbReference>
<dbReference type="PROSITE" id="PS51349">
    <property type="entry name" value="FMN_HYDROXY_ACID_DH_2"/>
    <property type="match status" value="1"/>
</dbReference>
<feature type="chain" id="PRO_0000383457" description="L-lactate dehydrogenase">
    <location>
        <begin position="1"/>
        <end position="381"/>
    </location>
</feature>
<feature type="domain" description="FMN hydroxy acid dehydrogenase" evidence="1">
    <location>
        <begin position="1"/>
        <end position="380"/>
    </location>
</feature>
<feature type="active site" description="Proton acceptor" evidence="1">
    <location>
        <position position="275"/>
    </location>
</feature>
<feature type="binding site" evidence="1">
    <location>
        <position position="24"/>
    </location>
    <ligand>
        <name>substrate</name>
    </ligand>
</feature>
<feature type="binding site" evidence="1">
    <location>
        <position position="106"/>
    </location>
    <ligand>
        <name>FMN</name>
        <dbReference type="ChEBI" id="CHEBI:58210"/>
    </ligand>
</feature>
<feature type="binding site" evidence="1">
    <location>
        <position position="127"/>
    </location>
    <ligand>
        <name>FMN</name>
        <dbReference type="ChEBI" id="CHEBI:58210"/>
    </ligand>
</feature>
<feature type="binding site" evidence="1">
    <location>
        <position position="129"/>
    </location>
    <ligand>
        <name>substrate</name>
    </ligand>
</feature>
<feature type="binding site" evidence="1">
    <location>
        <position position="155"/>
    </location>
    <ligand>
        <name>FMN</name>
        <dbReference type="ChEBI" id="CHEBI:58210"/>
    </ligand>
</feature>
<feature type="binding site" evidence="1">
    <location>
        <position position="164"/>
    </location>
    <ligand>
        <name>substrate</name>
    </ligand>
</feature>
<feature type="binding site" evidence="1">
    <location>
        <position position="251"/>
    </location>
    <ligand>
        <name>FMN</name>
        <dbReference type="ChEBI" id="CHEBI:58210"/>
    </ligand>
</feature>
<feature type="binding site" evidence="1">
    <location>
        <position position="278"/>
    </location>
    <ligand>
        <name>substrate</name>
    </ligand>
</feature>
<feature type="binding site" evidence="1">
    <location>
        <begin position="306"/>
        <end position="330"/>
    </location>
    <ligand>
        <name>FMN</name>
        <dbReference type="ChEBI" id="CHEBI:58210"/>
    </ligand>
</feature>
<sequence length="381" mass="41259">MIISASTDYRAAAQRKLPPFLFHYIDGGAYNEQTLRRNTADLADIALRQRVLKNMSELSLETQLFGETQAMPVVLGPVGLSGMYARRGEVQAARAADKKGIPFTLSTLSVCPIEEVAPAIARPMWFQLYVLKDRGFMRNALTRAQAAGVKTLVFTVDMPVPGARYRDAHSGMSGPNAAARRLLQAIAHPQWAWDVGLNGKPHDLGNISAYLGKPTTLEDYMGWIATNFDPSISWKDLEWVREFWQGPMIIKGILDPEDAKDAVKFGADGIVVSNHGGRQLDGVLSTARALPAIADAVKGDITILADSGIRTGLDVVRMIALGADSVLLGRAFVYALATAGEAGVINLLTLIEQEMRVAMTLTGAKRIADINRDSLAVSERG</sequence>
<protein>
    <recommendedName>
        <fullName evidence="1">L-lactate dehydrogenase</fullName>
        <ecNumber evidence="1">1.1.-.-</ecNumber>
    </recommendedName>
</protein>
<accession>B1JPU0</accession>